<accession>Q6C982</accession>
<name>ARP6_YARLI</name>
<comment type="function">
    <text evidence="1">Component of the SWR1 complex which mediates the ATP-dependent exchange of histone H2A for the H2A variant HZT1 leading to transcriptional regulation of selected genes by chromatin remodeling. Involved in chromosome stability (By similarity).</text>
</comment>
<comment type="subunit">
    <text evidence="1">Component of the SWR1 chromatin remodeling complex.</text>
</comment>
<comment type="subcellular location">
    <subcellularLocation>
        <location evidence="1">Cytoplasm</location>
    </subcellularLocation>
    <subcellularLocation>
        <location evidence="1">Cytoplasm</location>
        <location evidence="1">Cytoskeleton</location>
    </subcellularLocation>
    <subcellularLocation>
        <location evidence="1">Nucleus</location>
    </subcellularLocation>
</comment>
<comment type="similarity">
    <text evidence="2">Belongs to the actin family. ARP6 subfamily.</text>
</comment>
<keyword id="KW-0010">Activator</keyword>
<keyword id="KW-0156">Chromatin regulator</keyword>
<keyword id="KW-0963">Cytoplasm</keyword>
<keyword id="KW-0206">Cytoskeleton</keyword>
<keyword id="KW-0539">Nucleus</keyword>
<keyword id="KW-1185">Reference proteome</keyword>
<keyword id="KW-0804">Transcription</keyword>
<keyword id="KW-0805">Transcription regulation</keyword>
<protein>
    <recommendedName>
        <fullName>Actin-like protein ARP6</fullName>
    </recommendedName>
</protein>
<gene>
    <name type="primary">ARP6</name>
    <name type="ordered locus">YALI0D13178g</name>
</gene>
<sequence length="387" mass="43881">MILDNGSYAIKSDRTGDAETPNALIRGRDKTVYVGQDLTKCKDYASLVFKRPSEKGQLINWDIQKAVWDNLFYNPQTGVDTDSSLLLTQYPLTLPQVSANIDQVVFEEYGFEQYHRTEAANLVAWSSGQCLDACLVVDAGFNATHVTPVLFGQVHEPGIRRVNVGGKTMTNLLKETVSFRHYNMMDETYIINRVKEKVCFVSQDFDKDLDLAKKTKSLQVEYALPDYKTTKLGYVVDRKQHDISELQTLKLGNERFTMPEILFDPSIIDLQQSGLCETIAESIQASPKEFRSLLCSNIVIVGGCAKLPGFQSRLEKDLRPLIPSEYHMKTRLDDKPDFTTLQGGKVLVDQPGFSNLCVTKQEYDEYGWRLCRQRFQGETFDEDTESA</sequence>
<proteinExistence type="inferred from homology"/>
<dbReference type="EMBL" id="CR382130">
    <property type="protein sequence ID" value="CAG80968.1"/>
    <property type="molecule type" value="Genomic_DNA"/>
</dbReference>
<dbReference type="RefSeq" id="XP_502780.1">
    <property type="nucleotide sequence ID" value="XM_502780.1"/>
</dbReference>
<dbReference type="SMR" id="Q6C982"/>
<dbReference type="FunCoup" id="Q6C982">
    <property type="interactions" value="317"/>
</dbReference>
<dbReference type="STRING" id="284591.Q6C982"/>
<dbReference type="EnsemblFungi" id="CAG80968">
    <property type="protein sequence ID" value="CAG80968"/>
    <property type="gene ID" value="YALI0_D13178g"/>
</dbReference>
<dbReference type="KEGG" id="yli:2910814"/>
<dbReference type="VEuPathDB" id="FungiDB:YALI0_D13178g"/>
<dbReference type="HOGENOM" id="CLU_027965_1_1_1"/>
<dbReference type="InParanoid" id="Q6C982"/>
<dbReference type="OMA" id="FFEEYEC"/>
<dbReference type="OrthoDB" id="105323at4891"/>
<dbReference type="Proteomes" id="UP000001300">
    <property type="component" value="Chromosome D"/>
</dbReference>
<dbReference type="GO" id="GO:0005737">
    <property type="term" value="C:cytoplasm"/>
    <property type="evidence" value="ECO:0007669"/>
    <property type="project" value="UniProtKB-SubCell"/>
</dbReference>
<dbReference type="GO" id="GO:0005856">
    <property type="term" value="C:cytoskeleton"/>
    <property type="evidence" value="ECO:0007669"/>
    <property type="project" value="UniProtKB-SubCell"/>
</dbReference>
<dbReference type="GO" id="GO:0000812">
    <property type="term" value="C:Swr1 complex"/>
    <property type="evidence" value="ECO:0000318"/>
    <property type="project" value="GO_Central"/>
</dbReference>
<dbReference type="GO" id="GO:0031491">
    <property type="term" value="F:nucleosome binding"/>
    <property type="evidence" value="ECO:0000318"/>
    <property type="project" value="GO_Central"/>
</dbReference>
<dbReference type="GO" id="GO:0006338">
    <property type="term" value="P:chromatin remodeling"/>
    <property type="evidence" value="ECO:0007669"/>
    <property type="project" value="EnsemblFungi"/>
</dbReference>
<dbReference type="CDD" id="cd10210">
    <property type="entry name" value="ASKHA_NBD_Arp6"/>
    <property type="match status" value="1"/>
</dbReference>
<dbReference type="FunFam" id="3.90.640.10:FF:000014">
    <property type="entry name" value="Putative actin-related protein 6"/>
    <property type="match status" value="1"/>
</dbReference>
<dbReference type="Gene3D" id="3.30.420.40">
    <property type="match status" value="2"/>
</dbReference>
<dbReference type="Gene3D" id="3.90.640.10">
    <property type="entry name" value="Actin, Chain A, domain 4"/>
    <property type="match status" value="1"/>
</dbReference>
<dbReference type="InterPro" id="IPR004000">
    <property type="entry name" value="Actin"/>
</dbReference>
<dbReference type="InterPro" id="IPR043129">
    <property type="entry name" value="ATPase_NBD"/>
</dbReference>
<dbReference type="PANTHER" id="PTHR11937">
    <property type="entry name" value="ACTIN"/>
    <property type="match status" value="1"/>
</dbReference>
<dbReference type="Pfam" id="PF00022">
    <property type="entry name" value="Actin"/>
    <property type="match status" value="1"/>
</dbReference>
<dbReference type="SMART" id="SM00268">
    <property type="entry name" value="ACTIN"/>
    <property type="match status" value="1"/>
</dbReference>
<dbReference type="SUPFAM" id="SSF53067">
    <property type="entry name" value="Actin-like ATPase domain"/>
    <property type="match status" value="2"/>
</dbReference>
<reference key="1">
    <citation type="journal article" date="2004" name="Nature">
        <title>Genome evolution in yeasts.</title>
        <authorList>
            <person name="Dujon B."/>
            <person name="Sherman D."/>
            <person name="Fischer G."/>
            <person name="Durrens P."/>
            <person name="Casaregola S."/>
            <person name="Lafontaine I."/>
            <person name="de Montigny J."/>
            <person name="Marck C."/>
            <person name="Neuveglise C."/>
            <person name="Talla E."/>
            <person name="Goffard N."/>
            <person name="Frangeul L."/>
            <person name="Aigle M."/>
            <person name="Anthouard V."/>
            <person name="Babour A."/>
            <person name="Barbe V."/>
            <person name="Barnay S."/>
            <person name="Blanchin S."/>
            <person name="Beckerich J.-M."/>
            <person name="Beyne E."/>
            <person name="Bleykasten C."/>
            <person name="Boisrame A."/>
            <person name="Boyer J."/>
            <person name="Cattolico L."/>
            <person name="Confanioleri F."/>
            <person name="de Daruvar A."/>
            <person name="Despons L."/>
            <person name="Fabre E."/>
            <person name="Fairhead C."/>
            <person name="Ferry-Dumazet H."/>
            <person name="Groppi A."/>
            <person name="Hantraye F."/>
            <person name="Hennequin C."/>
            <person name="Jauniaux N."/>
            <person name="Joyet P."/>
            <person name="Kachouri R."/>
            <person name="Kerrest A."/>
            <person name="Koszul R."/>
            <person name="Lemaire M."/>
            <person name="Lesur I."/>
            <person name="Ma L."/>
            <person name="Muller H."/>
            <person name="Nicaud J.-M."/>
            <person name="Nikolski M."/>
            <person name="Oztas S."/>
            <person name="Ozier-Kalogeropoulos O."/>
            <person name="Pellenz S."/>
            <person name="Potier S."/>
            <person name="Richard G.-F."/>
            <person name="Straub M.-L."/>
            <person name="Suleau A."/>
            <person name="Swennen D."/>
            <person name="Tekaia F."/>
            <person name="Wesolowski-Louvel M."/>
            <person name="Westhof E."/>
            <person name="Wirth B."/>
            <person name="Zeniou-Meyer M."/>
            <person name="Zivanovic Y."/>
            <person name="Bolotin-Fukuhara M."/>
            <person name="Thierry A."/>
            <person name="Bouchier C."/>
            <person name="Caudron B."/>
            <person name="Scarpelli C."/>
            <person name="Gaillardin C."/>
            <person name="Weissenbach J."/>
            <person name="Wincker P."/>
            <person name="Souciet J.-L."/>
        </authorList>
    </citation>
    <scope>NUCLEOTIDE SEQUENCE [LARGE SCALE GENOMIC DNA]</scope>
    <source>
        <strain>CLIB 122 / E 150</strain>
    </source>
</reference>
<evidence type="ECO:0000250" key="1"/>
<evidence type="ECO:0000305" key="2"/>
<organism>
    <name type="scientific">Yarrowia lipolytica (strain CLIB 122 / E 150)</name>
    <name type="common">Yeast</name>
    <name type="synonym">Candida lipolytica</name>
    <dbReference type="NCBI Taxonomy" id="284591"/>
    <lineage>
        <taxon>Eukaryota</taxon>
        <taxon>Fungi</taxon>
        <taxon>Dikarya</taxon>
        <taxon>Ascomycota</taxon>
        <taxon>Saccharomycotina</taxon>
        <taxon>Dipodascomycetes</taxon>
        <taxon>Dipodascales</taxon>
        <taxon>Dipodascales incertae sedis</taxon>
        <taxon>Yarrowia</taxon>
    </lineage>
</organism>
<feature type="chain" id="PRO_0000089120" description="Actin-like protein ARP6">
    <location>
        <begin position="1"/>
        <end position="387"/>
    </location>
</feature>